<dbReference type="EC" id="3.6.1.-" evidence="1"/>
<dbReference type="EMBL" id="BX950851">
    <property type="protein sequence ID" value="CAG73896.1"/>
    <property type="molecule type" value="Genomic_DNA"/>
</dbReference>
<dbReference type="RefSeq" id="WP_011092585.1">
    <property type="nucleotide sequence ID" value="NC_004547.2"/>
</dbReference>
<dbReference type="SMR" id="Q6D8I9"/>
<dbReference type="STRING" id="218491.ECA0985"/>
<dbReference type="GeneID" id="57207812"/>
<dbReference type="KEGG" id="eca:ECA0985"/>
<dbReference type="PATRIC" id="fig|218491.5.peg.991"/>
<dbReference type="eggNOG" id="COG0494">
    <property type="taxonomic scope" value="Bacteria"/>
</dbReference>
<dbReference type="HOGENOM" id="CLU_087195_3_2_6"/>
<dbReference type="OrthoDB" id="9816040at2"/>
<dbReference type="Proteomes" id="UP000007966">
    <property type="component" value="Chromosome"/>
</dbReference>
<dbReference type="GO" id="GO:0005737">
    <property type="term" value="C:cytoplasm"/>
    <property type="evidence" value="ECO:0007669"/>
    <property type="project" value="TreeGrafter"/>
</dbReference>
<dbReference type="GO" id="GO:0034353">
    <property type="term" value="F:mRNA 5'-diphosphatase activity"/>
    <property type="evidence" value="ECO:0007669"/>
    <property type="project" value="TreeGrafter"/>
</dbReference>
<dbReference type="GO" id="GO:0006402">
    <property type="term" value="P:mRNA catabolic process"/>
    <property type="evidence" value="ECO:0007669"/>
    <property type="project" value="TreeGrafter"/>
</dbReference>
<dbReference type="CDD" id="cd03671">
    <property type="entry name" value="NUDIX_Ap4A_hydrolase_plant_like"/>
    <property type="match status" value="1"/>
</dbReference>
<dbReference type="FunFam" id="3.90.79.10:FF:000001">
    <property type="entry name" value="RNA pyrophosphohydrolase"/>
    <property type="match status" value="1"/>
</dbReference>
<dbReference type="Gene3D" id="3.90.79.10">
    <property type="entry name" value="Nucleoside Triphosphate Pyrophosphohydrolase"/>
    <property type="match status" value="1"/>
</dbReference>
<dbReference type="HAMAP" id="MF_00298">
    <property type="entry name" value="Nudix_RppH"/>
    <property type="match status" value="1"/>
</dbReference>
<dbReference type="InterPro" id="IPR020476">
    <property type="entry name" value="Nudix_hydrolase"/>
</dbReference>
<dbReference type="InterPro" id="IPR015797">
    <property type="entry name" value="NUDIX_hydrolase-like_dom_sf"/>
</dbReference>
<dbReference type="InterPro" id="IPR020084">
    <property type="entry name" value="NUDIX_hydrolase_CS"/>
</dbReference>
<dbReference type="InterPro" id="IPR000086">
    <property type="entry name" value="NUDIX_hydrolase_dom"/>
</dbReference>
<dbReference type="InterPro" id="IPR022927">
    <property type="entry name" value="RppH"/>
</dbReference>
<dbReference type="NCBIfam" id="NF001934">
    <property type="entry name" value="PRK00714.1-1"/>
    <property type="match status" value="1"/>
</dbReference>
<dbReference type="NCBIfam" id="NF001937">
    <property type="entry name" value="PRK00714.1-4"/>
    <property type="match status" value="1"/>
</dbReference>
<dbReference type="NCBIfam" id="NF001938">
    <property type="entry name" value="PRK00714.1-5"/>
    <property type="match status" value="1"/>
</dbReference>
<dbReference type="PANTHER" id="PTHR23114">
    <property type="entry name" value="M7GPPPN-MRNA HYDROLASE"/>
    <property type="match status" value="1"/>
</dbReference>
<dbReference type="PANTHER" id="PTHR23114:SF17">
    <property type="entry name" value="M7GPPPN-MRNA HYDROLASE"/>
    <property type="match status" value="1"/>
</dbReference>
<dbReference type="Pfam" id="PF00293">
    <property type="entry name" value="NUDIX"/>
    <property type="match status" value="1"/>
</dbReference>
<dbReference type="PRINTS" id="PR00502">
    <property type="entry name" value="NUDIXFAMILY"/>
</dbReference>
<dbReference type="SUPFAM" id="SSF55811">
    <property type="entry name" value="Nudix"/>
    <property type="match status" value="1"/>
</dbReference>
<dbReference type="PROSITE" id="PS51462">
    <property type="entry name" value="NUDIX"/>
    <property type="match status" value="1"/>
</dbReference>
<dbReference type="PROSITE" id="PS00893">
    <property type="entry name" value="NUDIX_BOX"/>
    <property type="match status" value="1"/>
</dbReference>
<sequence>MIDDDGYRPNVGIVICNRQGQVMWARRYGQHSWQFPQGGINPGESPEQAMYRELFEEVGLRKKDVRVLASTRNWLRYKLPKRLVRWDTKPVCIGQKQKWFLLQLMCNESDINMQSSGTPEFDGWRWVSYWYPVRQVVSFKRDVYRRVMKEFISPVILLQESVAARVATPPSPRRKRG</sequence>
<evidence type="ECO:0000255" key="1">
    <source>
        <dbReference type="HAMAP-Rule" id="MF_00298"/>
    </source>
</evidence>
<keyword id="KW-0378">Hydrolase</keyword>
<keyword id="KW-1185">Reference proteome</keyword>
<gene>
    <name evidence="1" type="primary">rppH</name>
    <name evidence="1" type="synonym">nudH</name>
    <name type="ordered locus">ECA0985</name>
</gene>
<protein>
    <recommendedName>
        <fullName evidence="1">RNA pyrophosphohydrolase</fullName>
        <ecNumber evidence="1">3.6.1.-</ecNumber>
    </recommendedName>
    <alternativeName>
        <fullName evidence="1">(Di)nucleoside polyphosphate hydrolase</fullName>
    </alternativeName>
</protein>
<proteinExistence type="inferred from homology"/>
<comment type="function">
    <text evidence="1">Accelerates the degradation of transcripts by removing pyrophosphate from the 5'-end of triphosphorylated RNA, leading to a more labile monophosphorylated state that can stimulate subsequent ribonuclease cleavage.</text>
</comment>
<comment type="cofactor">
    <cofactor evidence="1">
        <name>a divalent metal cation</name>
        <dbReference type="ChEBI" id="CHEBI:60240"/>
    </cofactor>
</comment>
<comment type="similarity">
    <text evidence="1">Belongs to the Nudix hydrolase family. RppH subfamily.</text>
</comment>
<organism>
    <name type="scientific">Pectobacterium atrosepticum (strain SCRI 1043 / ATCC BAA-672)</name>
    <name type="common">Erwinia carotovora subsp. atroseptica</name>
    <dbReference type="NCBI Taxonomy" id="218491"/>
    <lineage>
        <taxon>Bacteria</taxon>
        <taxon>Pseudomonadati</taxon>
        <taxon>Pseudomonadota</taxon>
        <taxon>Gammaproteobacteria</taxon>
        <taxon>Enterobacterales</taxon>
        <taxon>Pectobacteriaceae</taxon>
        <taxon>Pectobacterium</taxon>
    </lineage>
</organism>
<feature type="chain" id="PRO_0000231907" description="RNA pyrophosphohydrolase">
    <location>
        <begin position="1"/>
        <end position="177"/>
    </location>
</feature>
<feature type="domain" description="Nudix hydrolase" evidence="1">
    <location>
        <begin position="6"/>
        <end position="149"/>
    </location>
</feature>
<feature type="short sequence motif" description="Nudix box">
    <location>
        <begin position="38"/>
        <end position="59"/>
    </location>
</feature>
<reference key="1">
    <citation type="journal article" date="2004" name="Proc. Natl. Acad. Sci. U.S.A.">
        <title>Genome sequence of the enterobacterial phytopathogen Erwinia carotovora subsp. atroseptica and characterization of virulence factors.</title>
        <authorList>
            <person name="Bell K.S."/>
            <person name="Sebaihia M."/>
            <person name="Pritchard L."/>
            <person name="Holden M.T.G."/>
            <person name="Hyman L.J."/>
            <person name="Holeva M.C."/>
            <person name="Thomson N.R."/>
            <person name="Bentley S.D."/>
            <person name="Churcher L.J.C."/>
            <person name="Mungall K."/>
            <person name="Atkin R."/>
            <person name="Bason N."/>
            <person name="Brooks K."/>
            <person name="Chillingworth T."/>
            <person name="Clark K."/>
            <person name="Doggett J."/>
            <person name="Fraser A."/>
            <person name="Hance Z."/>
            <person name="Hauser H."/>
            <person name="Jagels K."/>
            <person name="Moule S."/>
            <person name="Norbertczak H."/>
            <person name="Ormond D."/>
            <person name="Price C."/>
            <person name="Quail M.A."/>
            <person name="Sanders M."/>
            <person name="Walker D."/>
            <person name="Whitehead S."/>
            <person name="Salmond G.P.C."/>
            <person name="Birch P.R.J."/>
            <person name="Parkhill J."/>
            <person name="Toth I.K."/>
        </authorList>
    </citation>
    <scope>NUCLEOTIDE SEQUENCE [LARGE SCALE GENOMIC DNA]</scope>
    <source>
        <strain>SCRI 1043 / ATCC BAA-672</strain>
    </source>
</reference>
<name>RPPH_PECAS</name>
<accession>Q6D8I9</accession>